<accession>Q30YX3</accession>
<organism>
    <name type="scientific">Oleidesulfovibrio alaskensis (strain ATCC BAA-1058 / DSM 17464 / G20)</name>
    <name type="common">Desulfovibrio alaskensis</name>
    <dbReference type="NCBI Taxonomy" id="207559"/>
    <lineage>
        <taxon>Bacteria</taxon>
        <taxon>Pseudomonadati</taxon>
        <taxon>Thermodesulfobacteriota</taxon>
        <taxon>Desulfovibrionia</taxon>
        <taxon>Desulfovibrionales</taxon>
        <taxon>Desulfovibrionaceae</taxon>
        <taxon>Oleidesulfovibrio</taxon>
    </lineage>
</organism>
<dbReference type="EC" id="2.1.1.166" evidence="1"/>
<dbReference type="EMBL" id="CP000112">
    <property type="protein sequence ID" value="ABB39123.1"/>
    <property type="molecule type" value="Genomic_DNA"/>
</dbReference>
<dbReference type="RefSeq" id="WP_011368203.1">
    <property type="nucleotide sequence ID" value="NC_007519.1"/>
</dbReference>
<dbReference type="SMR" id="Q30YX3"/>
<dbReference type="STRING" id="207559.Dde_2326"/>
<dbReference type="KEGG" id="dde:Dde_2326"/>
<dbReference type="eggNOG" id="COG0293">
    <property type="taxonomic scope" value="Bacteria"/>
</dbReference>
<dbReference type="HOGENOM" id="CLU_009422_4_0_7"/>
<dbReference type="Proteomes" id="UP000002710">
    <property type="component" value="Chromosome"/>
</dbReference>
<dbReference type="GO" id="GO:0005737">
    <property type="term" value="C:cytoplasm"/>
    <property type="evidence" value="ECO:0007669"/>
    <property type="project" value="UniProtKB-SubCell"/>
</dbReference>
<dbReference type="GO" id="GO:0008650">
    <property type="term" value="F:rRNA (uridine-2'-O-)-methyltransferase activity"/>
    <property type="evidence" value="ECO:0007669"/>
    <property type="project" value="UniProtKB-UniRule"/>
</dbReference>
<dbReference type="Gene3D" id="3.40.50.150">
    <property type="entry name" value="Vaccinia Virus protein VP39"/>
    <property type="match status" value="1"/>
</dbReference>
<dbReference type="HAMAP" id="MF_01547">
    <property type="entry name" value="RNA_methyltr_E"/>
    <property type="match status" value="1"/>
</dbReference>
<dbReference type="InterPro" id="IPR050082">
    <property type="entry name" value="RNA_methyltr_RlmE"/>
</dbReference>
<dbReference type="InterPro" id="IPR002877">
    <property type="entry name" value="RNA_MeTrfase_FtsJ_dom"/>
</dbReference>
<dbReference type="InterPro" id="IPR015507">
    <property type="entry name" value="rRNA-MeTfrase_E"/>
</dbReference>
<dbReference type="InterPro" id="IPR029063">
    <property type="entry name" value="SAM-dependent_MTases_sf"/>
</dbReference>
<dbReference type="PANTHER" id="PTHR10920">
    <property type="entry name" value="RIBOSOMAL RNA METHYLTRANSFERASE"/>
    <property type="match status" value="1"/>
</dbReference>
<dbReference type="PANTHER" id="PTHR10920:SF18">
    <property type="entry name" value="RRNA METHYLTRANSFERASE 2, MITOCHONDRIAL"/>
    <property type="match status" value="1"/>
</dbReference>
<dbReference type="Pfam" id="PF01728">
    <property type="entry name" value="FtsJ"/>
    <property type="match status" value="1"/>
</dbReference>
<dbReference type="PIRSF" id="PIRSF005461">
    <property type="entry name" value="23S_rRNA_mtase"/>
    <property type="match status" value="1"/>
</dbReference>
<dbReference type="SUPFAM" id="SSF53335">
    <property type="entry name" value="S-adenosyl-L-methionine-dependent methyltransferases"/>
    <property type="match status" value="1"/>
</dbReference>
<proteinExistence type="inferred from homology"/>
<comment type="function">
    <text evidence="1">Specifically methylates the uridine in position 2552 of 23S rRNA at the 2'-O position of the ribose in the fully assembled 50S ribosomal subunit.</text>
</comment>
<comment type="catalytic activity">
    <reaction evidence="1">
        <text>uridine(2552) in 23S rRNA + S-adenosyl-L-methionine = 2'-O-methyluridine(2552) in 23S rRNA + S-adenosyl-L-homocysteine + H(+)</text>
        <dbReference type="Rhea" id="RHEA:42720"/>
        <dbReference type="Rhea" id="RHEA-COMP:10202"/>
        <dbReference type="Rhea" id="RHEA-COMP:10203"/>
        <dbReference type="ChEBI" id="CHEBI:15378"/>
        <dbReference type="ChEBI" id="CHEBI:57856"/>
        <dbReference type="ChEBI" id="CHEBI:59789"/>
        <dbReference type="ChEBI" id="CHEBI:65315"/>
        <dbReference type="ChEBI" id="CHEBI:74478"/>
        <dbReference type="EC" id="2.1.1.166"/>
    </reaction>
</comment>
<comment type="subcellular location">
    <subcellularLocation>
        <location evidence="1">Cytoplasm</location>
    </subcellularLocation>
</comment>
<comment type="similarity">
    <text evidence="1">Belongs to the class I-like SAM-binding methyltransferase superfamily. RNA methyltransferase RlmE family.</text>
</comment>
<reference key="1">
    <citation type="journal article" date="2011" name="J. Bacteriol.">
        <title>Complete genome sequence and updated annotation of Desulfovibrio alaskensis G20.</title>
        <authorList>
            <person name="Hauser L.J."/>
            <person name="Land M.L."/>
            <person name="Brown S.D."/>
            <person name="Larimer F."/>
            <person name="Keller K.L."/>
            <person name="Rapp-Giles B.J."/>
            <person name="Price M.N."/>
            <person name="Lin M."/>
            <person name="Bruce D.C."/>
            <person name="Detter J.C."/>
            <person name="Tapia R."/>
            <person name="Han C.S."/>
            <person name="Goodwin L.A."/>
            <person name="Cheng J.F."/>
            <person name="Pitluck S."/>
            <person name="Copeland A."/>
            <person name="Lucas S."/>
            <person name="Nolan M."/>
            <person name="Lapidus A.L."/>
            <person name="Palumbo A.V."/>
            <person name="Wall J.D."/>
        </authorList>
    </citation>
    <scope>NUCLEOTIDE SEQUENCE [LARGE SCALE GENOMIC DNA]</scope>
    <source>
        <strain>ATCC BAA-1058 / DSM 17464 / G20</strain>
    </source>
</reference>
<sequence>MKKYRDHYFLKAKRENYPARSVYKLKEIDKRFGILKQGMRVLDLGAAPGSWSLGAAEKIGPSGRVLAADIQTTETVFPPNVTFMQEDVFERSAEFEQALSETGPFDVVISDMAPKTTGHKFTDQARSSNLCFEALAVASLHLVEGGSFVVKIFMGPDVEAYVKQMRTLFTAVKSFKPKSSRSESKETFYIGLGFKGLPEFSEQEGED</sequence>
<feature type="chain" id="PRO_0000282740" description="Ribosomal RNA large subunit methyltransferase E">
    <location>
        <begin position="1"/>
        <end position="207"/>
    </location>
</feature>
<feature type="active site" description="Proton acceptor" evidence="1">
    <location>
        <position position="151"/>
    </location>
</feature>
<feature type="binding site" evidence="1">
    <location>
        <position position="49"/>
    </location>
    <ligand>
        <name>S-adenosyl-L-methionine</name>
        <dbReference type="ChEBI" id="CHEBI:59789"/>
    </ligand>
</feature>
<feature type="binding site" evidence="1">
    <location>
        <position position="51"/>
    </location>
    <ligand>
        <name>S-adenosyl-L-methionine</name>
        <dbReference type="ChEBI" id="CHEBI:59789"/>
    </ligand>
</feature>
<feature type="binding site" evidence="1">
    <location>
        <position position="69"/>
    </location>
    <ligand>
        <name>S-adenosyl-L-methionine</name>
        <dbReference type="ChEBI" id="CHEBI:59789"/>
    </ligand>
</feature>
<feature type="binding site" evidence="1">
    <location>
        <position position="87"/>
    </location>
    <ligand>
        <name>S-adenosyl-L-methionine</name>
        <dbReference type="ChEBI" id="CHEBI:59789"/>
    </ligand>
</feature>
<feature type="binding site" evidence="1">
    <location>
        <position position="111"/>
    </location>
    <ligand>
        <name>S-adenosyl-L-methionine</name>
        <dbReference type="ChEBI" id="CHEBI:59789"/>
    </ligand>
</feature>
<evidence type="ECO:0000255" key="1">
    <source>
        <dbReference type="HAMAP-Rule" id="MF_01547"/>
    </source>
</evidence>
<gene>
    <name evidence="1" type="primary">rlmE</name>
    <name evidence="1" type="synonym">ftsJ</name>
    <name evidence="1" type="synonym">rrmJ</name>
    <name type="ordered locus">Dde_2326</name>
</gene>
<protein>
    <recommendedName>
        <fullName evidence="1">Ribosomal RNA large subunit methyltransferase E</fullName>
        <ecNumber evidence="1">2.1.1.166</ecNumber>
    </recommendedName>
    <alternativeName>
        <fullName evidence="1">23S rRNA Um2552 methyltransferase</fullName>
    </alternativeName>
    <alternativeName>
        <fullName evidence="1">rRNA (uridine-2'-O-)-methyltransferase</fullName>
    </alternativeName>
</protein>
<keyword id="KW-0963">Cytoplasm</keyword>
<keyword id="KW-0489">Methyltransferase</keyword>
<keyword id="KW-1185">Reference proteome</keyword>
<keyword id="KW-0698">rRNA processing</keyword>
<keyword id="KW-0949">S-adenosyl-L-methionine</keyword>
<keyword id="KW-0808">Transferase</keyword>
<name>RLME_OLEA2</name>